<proteinExistence type="evidence at protein level"/>
<feature type="chain" id="PRO_0000339387" description="C-type lectin domain family 2 member L">
    <location>
        <begin position="1"/>
        <end position="211"/>
    </location>
</feature>
<feature type="transmembrane region" description="Helical" evidence="1">
    <location>
        <begin position="66"/>
        <end position="86"/>
    </location>
</feature>
<feature type="domain" description="C-type lectin" evidence="2">
    <location>
        <begin position="104"/>
        <end position="206"/>
    </location>
</feature>
<feature type="region of interest" description="Disordered" evidence="3">
    <location>
        <begin position="1"/>
        <end position="53"/>
    </location>
</feature>
<feature type="compositionally biased region" description="Pro residues" evidence="3">
    <location>
        <begin position="10"/>
        <end position="28"/>
    </location>
</feature>
<feature type="modified residue" description="Phosphoserine" evidence="5">
    <location>
        <position position="29"/>
    </location>
</feature>
<feature type="disulfide bond" evidence="2">
    <location>
        <begin position="97"/>
        <end position="108"/>
    </location>
</feature>
<feature type="disulfide bond" evidence="2">
    <location>
        <begin position="125"/>
        <end position="205"/>
    </location>
</feature>
<feature type="disulfide bond" evidence="2">
    <location>
        <begin position="184"/>
        <end position="197"/>
    </location>
</feature>
<accession>Q0ZCA7</accession>
<name>CLC2L_RAT</name>
<protein>
    <recommendedName>
        <fullName>C-type lectin domain family 2 member L</fullName>
    </recommendedName>
</protein>
<keyword id="KW-1015">Disulfide bond</keyword>
<keyword id="KW-0430">Lectin</keyword>
<keyword id="KW-0472">Membrane</keyword>
<keyword id="KW-0597">Phosphoprotein</keyword>
<keyword id="KW-1185">Reference proteome</keyword>
<keyword id="KW-0812">Transmembrane</keyword>
<keyword id="KW-1133">Transmembrane helix</keyword>
<dbReference type="EMBL" id="AABR03034016">
    <property type="status" value="NOT_ANNOTATED_CDS"/>
    <property type="molecule type" value="Genomic_DNA"/>
</dbReference>
<dbReference type="EMBL" id="AABR03035221">
    <property type="status" value="NOT_ANNOTATED_CDS"/>
    <property type="molecule type" value="Genomic_DNA"/>
</dbReference>
<dbReference type="EMBL" id="DQ630549">
    <property type="protein sequence ID" value="ABG00196.1"/>
    <property type="status" value="ALT_INIT"/>
    <property type="molecule type" value="mRNA"/>
</dbReference>
<dbReference type="RefSeq" id="NP_001037698.2">
    <property type="nucleotide sequence ID" value="NM_001044233.2"/>
</dbReference>
<dbReference type="SMR" id="Q0ZCA7"/>
<dbReference type="FunCoup" id="Q0ZCA7">
    <property type="interactions" value="591"/>
</dbReference>
<dbReference type="STRING" id="10116.ENSRNOP00000070445"/>
<dbReference type="iPTMnet" id="Q0ZCA7"/>
<dbReference type="PhosphoSitePlus" id="Q0ZCA7"/>
<dbReference type="PaxDb" id="10116-ENSRNOP00000060718"/>
<dbReference type="Ensembl" id="ENSRNOT00000067097.3">
    <property type="protein sequence ID" value="ENSRNOP00000060718.3"/>
    <property type="gene ID" value="ENSRNOG00000029644.6"/>
</dbReference>
<dbReference type="GeneID" id="296985"/>
<dbReference type="KEGG" id="rno:296985"/>
<dbReference type="UCSC" id="RGD:1565373">
    <property type="organism name" value="rat"/>
</dbReference>
<dbReference type="AGR" id="RGD:1565373"/>
<dbReference type="CTD" id="154790"/>
<dbReference type="RGD" id="1565373">
    <property type="gene designation" value="Clec2l"/>
</dbReference>
<dbReference type="eggNOG" id="KOG1766">
    <property type="taxonomic scope" value="Eukaryota"/>
</dbReference>
<dbReference type="eggNOG" id="KOG4297">
    <property type="taxonomic scope" value="Eukaryota"/>
</dbReference>
<dbReference type="GeneTree" id="ENSGT00940000162503"/>
<dbReference type="HOGENOM" id="CLU_049894_8_4_1"/>
<dbReference type="InParanoid" id="Q0ZCA7"/>
<dbReference type="OMA" id="CHTHEAS"/>
<dbReference type="OrthoDB" id="8935730at2759"/>
<dbReference type="PRO" id="PR:Q0ZCA7"/>
<dbReference type="Proteomes" id="UP000002494">
    <property type="component" value="Chromosome 4"/>
</dbReference>
<dbReference type="Bgee" id="ENSRNOG00000029644">
    <property type="expression patterns" value="Expressed in frontal cortex and 18 other cell types or tissues"/>
</dbReference>
<dbReference type="ExpressionAtlas" id="Q0ZCA7">
    <property type="expression patterns" value="baseline and differential"/>
</dbReference>
<dbReference type="GO" id="GO:0016020">
    <property type="term" value="C:membrane"/>
    <property type="evidence" value="ECO:0007669"/>
    <property type="project" value="UniProtKB-SubCell"/>
</dbReference>
<dbReference type="GO" id="GO:0030246">
    <property type="term" value="F:carbohydrate binding"/>
    <property type="evidence" value="ECO:0007669"/>
    <property type="project" value="UniProtKB-KW"/>
</dbReference>
<dbReference type="CDD" id="cd03593">
    <property type="entry name" value="CLECT_NK_receptors_like"/>
    <property type="match status" value="1"/>
</dbReference>
<dbReference type="Gene3D" id="3.10.100.10">
    <property type="entry name" value="Mannose-Binding Protein A, subunit A"/>
    <property type="match status" value="1"/>
</dbReference>
<dbReference type="InterPro" id="IPR001304">
    <property type="entry name" value="C-type_lectin-like"/>
</dbReference>
<dbReference type="InterPro" id="IPR016186">
    <property type="entry name" value="C-type_lectin-like/link_sf"/>
</dbReference>
<dbReference type="InterPro" id="IPR016187">
    <property type="entry name" value="CTDL_fold"/>
</dbReference>
<dbReference type="InterPro" id="IPR033992">
    <property type="entry name" value="NKR-like_CTLD"/>
</dbReference>
<dbReference type="PANTHER" id="PTHR47498">
    <property type="entry name" value="C-TYPE LECTIN DOMAIN FAMILY 2 MEMBER L"/>
    <property type="match status" value="1"/>
</dbReference>
<dbReference type="PANTHER" id="PTHR47498:SF1">
    <property type="entry name" value="C-TYPE LECTIN DOMAIN FAMILY 2 MEMBER L"/>
    <property type="match status" value="1"/>
</dbReference>
<dbReference type="Pfam" id="PF00059">
    <property type="entry name" value="Lectin_C"/>
    <property type="match status" value="1"/>
</dbReference>
<dbReference type="SMART" id="SM00034">
    <property type="entry name" value="CLECT"/>
    <property type="match status" value="1"/>
</dbReference>
<dbReference type="SUPFAM" id="SSF56436">
    <property type="entry name" value="C-type lectin-like"/>
    <property type="match status" value="1"/>
</dbReference>
<dbReference type="PROSITE" id="PS00615">
    <property type="entry name" value="C_TYPE_LECTIN_1"/>
    <property type="match status" value="1"/>
</dbReference>
<dbReference type="PROSITE" id="PS50041">
    <property type="entry name" value="C_TYPE_LECTIN_2"/>
    <property type="match status" value="1"/>
</dbReference>
<gene>
    <name type="primary">Clec2l</name>
</gene>
<evidence type="ECO:0000255" key="1"/>
<evidence type="ECO:0000255" key="2">
    <source>
        <dbReference type="PROSITE-ProRule" id="PRU00040"/>
    </source>
</evidence>
<evidence type="ECO:0000256" key="3">
    <source>
        <dbReference type="SAM" id="MobiDB-lite"/>
    </source>
</evidence>
<evidence type="ECO:0000305" key="4"/>
<evidence type="ECO:0007744" key="5">
    <source>
    </source>
</evidence>
<sequence>MEPAREPPARARPPPPAARPAPAAPRPRSPAEAEARGPEGLLRRSGSGYEGSTSWKAALEDTTTRLLLGAIAVLLFAILVVMSILASKGCIKCETPCPEDWLLYGRKCYYFSEEPRDWNTGRQYCHTHEAALAVIQSQKELEFMFKFTRREPWIGLRRVGDDFHWVNGDPFDPDTFTISGTGECVFVEPTRLVSTECLTTRPWVCSKMAYT</sequence>
<organism>
    <name type="scientific">Rattus norvegicus</name>
    <name type="common">Rat</name>
    <dbReference type="NCBI Taxonomy" id="10116"/>
    <lineage>
        <taxon>Eukaryota</taxon>
        <taxon>Metazoa</taxon>
        <taxon>Chordata</taxon>
        <taxon>Craniata</taxon>
        <taxon>Vertebrata</taxon>
        <taxon>Euteleostomi</taxon>
        <taxon>Mammalia</taxon>
        <taxon>Eutheria</taxon>
        <taxon>Euarchontoglires</taxon>
        <taxon>Glires</taxon>
        <taxon>Rodentia</taxon>
        <taxon>Myomorpha</taxon>
        <taxon>Muroidea</taxon>
        <taxon>Muridae</taxon>
        <taxon>Murinae</taxon>
        <taxon>Rattus</taxon>
    </lineage>
</organism>
<comment type="subcellular location">
    <subcellularLocation>
        <location evidence="4">Membrane</location>
        <topology evidence="4">Single-pass membrane protein</topology>
    </subcellularLocation>
</comment>
<comment type="sequence caution" evidence="4">
    <conflict type="erroneous initiation">
        <sequence resource="EMBL-CDS" id="ABG00196"/>
    </conflict>
</comment>
<reference key="1">
    <citation type="journal article" date="2004" name="Nature">
        <title>Genome sequence of the Brown Norway rat yields insights into mammalian evolution.</title>
        <authorList>
            <person name="Gibbs R.A."/>
            <person name="Weinstock G.M."/>
            <person name="Metzker M.L."/>
            <person name="Muzny D.M."/>
            <person name="Sodergren E.J."/>
            <person name="Scherer S."/>
            <person name="Scott G."/>
            <person name="Steffen D."/>
            <person name="Worley K.C."/>
            <person name="Burch P.E."/>
            <person name="Okwuonu G."/>
            <person name="Hines S."/>
            <person name="Lewis L."/>
            <person name="Deramo C."/>
            <person name="Delgado O."/>
            <person name="Dugan-Rocha S."/>
            <person name="Miner G."/>
            <person name="Morgan M."/>
            <person name="Hawes A."/>
            <person name="Gill R."/>
            <person name="Holt R.A."/>
            <person name="Adams M.D."/>
            <person name="Amanatides P.G."/>
            <person name="Baden-Tillson H."/>
            <person name="Barnstead M."/>
            <person name="Chin S."/>
            <person name="Evans C.A."/>
            <person name="Ferriera S."/>
            <person name="Fosler C."/>
            <person name="Glodek A."/>
            <person name="Gu Z."/>
            <person name="Jennings D."/>
            <person name="Kraft C.L."/>
            <person name="Nguyen T."/>
            <person name="Pfannkoch C.M."/>
            <person name="Sitter C."/>
            <person name="Sutton G.G."/>
            <person name="Venter J.C."/>
            <person name="Woodage T."/>
            <person name="Smith D."/>
            <person name="Lee H.-M."/>
            <person name="Gustafson E."/>
            <person name="Cahill P."/>
            <person name="Kana A."/>
            <person name="Doucette-Stamm L."/>
            <person name="Weinstock K."/>
            <person name="Fechtel K."/>
            <person name="Weiss R.B."/>
            <person name="Dunn D.M."/>
            <person name="Green E.D."/>
            <person name="Blakesley R.W."/>
            <person name="Bouffard G.G."/>
            <person name="De Jong P.J."/>
            <person name="Osoegawa K."/>
            <person name="Zhu B."/>
            <person name="Marra M."/>
            <person name="Schein J."/>
            <person name="Bosdet I."/>
            <person name="Fjell C."/>
            <person name="Jones S."/>
            <person name="Krzywinski M."/>
            <person name="Mathewson C."/>
            <person name="Siddiqui A."/>
            <person name="Wye N."/>
            <person name="McPherson J."/>
            <person name="Zhao S."/>
            <person name="Fraser C.M."/>
            <person name="Shetty J."/>
            <person name="Shatsman S."/>
            <person name="Geer K."/>
            <person name="Chen Y."/>
            <person name="Abramzon S."/>
            <person name="Nierman W.C."/>
            <person name="Havlak P.H."/>
            <person name="Chen R."/>
            <person name="Durbin K.J."/>
            <person name="Egan A."/>
            <person name="Ren Y."/>
            <person name="Song X.-Z."/>
            <person name="Li B."/>
            <person name="Liu Y."/>
            <person name="Qin X."/>
            <person name="Cawley S."/>
            <person name="Cooney A.J."/>
            <person name="D'Souza L.M."/>
            <person name="Martin K."/>
            <person name="Wu J.Q."/>
            <person name="Gonzalez-Garay M.L."/>
            <person name="Jackson A.R."/>
            <person name="Kalafus K.J."/>
            <person name="McLeod M.P."/>
            <person name="Milosavljevic A."/>
            <person name="Virk D."/>
            <person name="Volkov A."/>
            <person name="Wheeler D.A."/>
            <person name="Zhang Z."/>
            <person name="Bailey J.A."/>
            <person name="Eichler E.E."/>
            <person name="Tuzun E."/>
            <person name="Birney E."/>
            <person name="Mongin E."/>
            <person name="Ureta-Vidal A."/>
            <person name="Woodwark C."/>
            <person name="Zdobnov E."/>
            <person name="Bork P."/>
            <person name="Suyama M."/>
            <person name="Torrents D."/>
            <person name="Alexandersson M."/>
            <person name="Trask B.J."/>
            <person name="Young J.M."/>
            <person name="Huang H."/>
            <person name="Wang H."/>
            <person name="Xing H."/>
            <person name="Daniels S."/>
            <person name="Gietzen D."/>
            <person name="Schmidt J."/>
            <person name="Stevens K."/>
            <person name="Vitt U."/>
            <person name="Wingrove J."/>
            <person name="Camara F."/>
            <person name="Mar Alba M."/>
            <person name="Abril J.F."/>
            <person name="Guigo R."/>
            <person name="Smit A."/>
            <person name="Dubchak I."/>
            <person name="Rubin E.M."/>
            <person name="Couronne O."/>
            <person name="Poliakov A."/>
            <person name="Huebner N."/>
            <person name="Ganten D."/>
            <person name="Goesele C."/>
            <person name="Hummel O."/>
            <person name="Kreitler T."/>
            <person name="Lee Y.-A."/>
            <person name="Monti J."/>
            <person name="Schulz H."/>
            <person name="Zimdahl H."/>
            <person name="Himmelbauer H."/>
            <person name="Lehrach H."/>
            <person name="Jacob H.J."/>
            <person name="Bromberg S."/>
            <person name="Gullings-Handley J."/>
            <person name="Jensen-Seaman M.I."/>
            <person name="Kwitek A.E."/>
            <person name="Lazar J."/>
            <person name="Pasko D."/>
            <person name="Tonellato P.J."/>
            <person name="Twigger S."/>
            <person name="Ponting C.P."/>
            <person name="Duarte J.M."/>
            <person name="Rice S."/>
            <person name="Goodstadt L."/>
            <person name="Beatson S.A."/>
            <person name="Emes R.D."/>
            <person name="Winter E.E."/>
            <person name="Webber C."/>
            <person name="Brandt P."/>
            <person name="Nyakatura G."/>
            <person name="Adetobi M."/>
            <person name="Chiaromonte F."/>
            <person name="Elnitski L."/>
            <person name="Eswara P."/>
            <person name="Hardison R.C."/>
            <person name="Hou M."/>
            <person name="Kolbe D."/>
            <person name="Makova K."/>
            <person name="Miller W."/>
            <person name="Nekrutenko A."/>
            <person name="Riemer C."/>
            <person name="Schwartz S."/>
            <person name="Taylor J."/>
            <person name="Yang S."/>
            <person name="Zhang Y."/>
            <person name="Lindpaintner K."/>
            <person name="Andrews T.D."/>
            <person name="Caccamo M."/>
            <person name="Clamp M."/>
            <person name="Clarke L."/>
            <person name="Curwen V."/>
            <person name="Durbin R.M."/>
            <person name="Eyras E."/>
            <person name="Searle S.M."/>
            <person name="Cooper G.M."/>
            <person name="Batzoglou S."/>
            <person name="Brudno M."/>
            <person name="Sidow A."/>
            <person name="Stone E.A."/>
            <person name="Payseur B.A."/>
            <person name="Bourque G."/>
            <person name="Lopez-Otin C."/>
            <person name="Puente X.S."/>
            <person name="Chakrabarti K."/>
            <person name="Chatterji S."/>
            <person name="Dewey C."/>
            <person name="Pachter L."/>
            <person name="Bray N."/>
            <person name="Yap V.B."/>
            <person name="Caspi A."/>
            <person name="Tesler G."/>
            <person name="Pevzner P.A."/>
            <person name="Haussler D."/>
            <person name="Roskin K.M."/>
            <person name="Baertsch R."/>
            <person name="Clawson H."/>
            <person name="Furey T.S."/>
            <person name="Hinrichs A.S."/>
            <person name="Karolchik D."/>
            <person name="Kent W.J."/>
            <person name="Rosenbloom K.R."/>
            <person name="Trumbower H."/>
            <person name="Weirauch M."/>
            <person name="Cooper D.N."/>
            <person name="Stenson P.D."/>
            <person name="Ma B."/>
            <person name="Brent M."/>
            <person name="Arumugam M."/>
            <person name="Shteynberg D."/>
            <person name="Copley R.R."/>
            <person name="Taylor M.S."/>
            <person name="Riethman H."/>
            <person name="Mudunuri U."/>
            <person name="Peterson J."/>
            <person name="Guyer M."/>
            <person name="Felsenfeld A."/>
            <person name="Old S."/>
            <person name="Mockrin S."/>
            <person name="Collins F.S."/>
        </authorList>
    </citation>
    <scope>NUCLEOTIDE SEQUENCE [LARGE SCALE GENOMIC DNA]</scope>
    <source>
        <strain>Brown Norway</strain>
    </source>
</reference>
<reference key="2">
    <citation type="submission" date="2006-05" db="EMBL/GenBank/DDBJ databases">
        <title>Characterization of a novel CD69-like protein.</title>
        <authorList>
            <person name="Cadet J.L."/>
            <person name="Cai N.S."/>
            <person name="Deng X.L."/>
            <person name="Jayanthi S."/>
            <person name="Ladenheim B."/>
            <person name="McCoy M.T."/>
        </authorList>
    </citation>
    <scope>NUCLEOTIDE SEQUENCE [MRNA] OF 48-211</scope>
    <source>
        <strain>Sprague-Dawley</strain>
    </source>
</reference>
<reference key="3">
    <citation type="journal article" date="2012" name="Nat. Commun.">
        <title>Quantitative maps of protein phosphorylation sites across 14 different rat organs and tissues.</title>
        <authorList>
            <person name="Lundby A."/>
            <person name="Secher A."/>
            <person name="Lage K."/>
            <person name="Nordsborg N.B."/>
            <person name="Dmytriyev A."/>
            <person name="Lundby C."/>
            <person name="Olsen J.V."/>
        </authorList>
    </citation>
    <scope>PHOSPHORYLATION [LARGE SCALE ANALYSIS] AT SER-29</scope>
    <scope>IDENTIFICATION BY MASS SPECTROMETRY [LARGE SCALE ANALYSIS]</scope>
</reference>